<dbReference type="EC" id="1.3.1.38" evidence="4 5"/>
<dbReference type="EC" id="1.3.1.44" evidence="4"/>
<dbReference type="EC" id="1.3.1.86" evidence="4 5"/>
<dbReference type="EMBL" id="AY741582">
    <property type="protein sequence ID" value="AAW66853.1"/>
    <property type="molecule type" value="mRNA"/>
</dbReference>
<dbReference type="SMR" id="Q5EU90"/>
<dbReference type="SwissLipids" id="SLP:000001707"/>
<dbReference type="KEGG" id="ag:AAW66853"/>
<dbReference type="BioCyc" id="MetaCyc:MONOMER-16778"/>
<dbReference type="BRENDA" id="1.3.1.44">
    <property type="organism ID" value="2197"/>
</dbReference>
<dbReference type="SABIO-RK" id="Q5EU90"/>
<dbReference type="UniPathway" id="UPA00199"/>
<dbReference type="GO" id="GO:0005739">
    <property type="term" value="C:mitochondrion"/>
    <property type="evidence" value="ECO:0007669"/>
    <property type="project" value="UniProtKB-SubCell"/>
</dbReference>
<dbReference type="GO" id="GO:0004318">
    <property type="term" value="F:enoyl-[acyl-carrier-protein] reductase (NADH) activity"/>
    <property type="evidence" value="ECO:0007669"/>
    <property type="project" value="TreeGrafter"/>
</dbReference>
<dbReference type="GO" id="GO:0051287">
    <property type="term" value="F:NAD binding"/>
    <property type="evidence" value="ECO:0000314"/>
    <property type="project" value="UniProtKB"/>
</dbReference>
<dbReference type="GO" id="GO:0050661">
    <property type="term" value="F:NADP binding"/>
    <property type="evidence" value="ECO:0000314"/>
    <property type="project" value="UniProtKB"/>
</dbReference>
<dbReference type="GO" id="GO:0050343">
    <property type="term" value="F:trans-2-enoyl-CoA reductase (NADH) activity"/>
    <property type="evidence" value="ECO:0000314"/>
    <property type="project" value="UniProtKB"/>
</dbReference>
<dbReference type="GO" id="GO:0019166">
    <property type="term" value="F:trans-2-enoyl-CoA reductase (NADPH) activity"/>
    <property type="evidence" value="ECO:0007669"/>
    <property type="project" value="RHEA"/>
</dbReference>
<dbReference type="GO" id="GO:0006633">
    <property type="term" value="P:fatty acid biosynthetic process"/>
    <property type="evidence" value="ECO:0007669"/>
    <property type="project" value="UniProtKB-KW"/>
</dbReference>
<dbReference type="FunFam" id="3.40.50.720:FF:000221">
    <property type="entry name" value="Enoyl-[acyl-carrier-protein] reductase [NADH]"/>
    <property type="match status" value="1"/>
</dbReference>
<dbReference type="Gene3D" id="3.40.50.720">
    <property type="entry name" value="NAD(P)-binding Rossmann-like Domain"/>
    <property type="match status" value="1"/>
</dbReference>
<dbReference type="HAMAP" id="MF_01838">
    <property type="entry name" value="FabV_reductase"/>
    <property type="match status" value="1"/>
</dbReference>
<dbReference type="InterPro" id="IPR024906">
    <property type="entry name" value="Eno_Rdtase_FAD-bd_dom"/>
</dbReference>
<dbReference type="InterPro" id="IPR024910">
    <property type="entry name" value="Enoyl-CoA_Rdtase_cat_dom"/>
</dbReference>
<dbReference type="InterPro" id="IPR050048">
    <property type="entry name" value="FabV-like_NADH_b"/>
</dbReference>
<dbReference type="InterPro" id="IPR010758">
    <property type="entry name" value="Trans-2-enoyl-CoA_reductase"/>
</dbReference>
<dbReference type="NCBIfam" id="NF043048">
    <property type="entry name" value="EnoyACPredFabV"/>
    <property type="match status" value="1"/>
</dbReference>
<dbReference type="NCBIfam" id="NF010177">
    <property type="entry name" value="PRK13656.1"/>
    <property type="match status" value="1"/>
</dbReference>
<dbReference type="PANTHER" id="PTHR37480">
    <property type="entry name" value="ENOYL-[ACYL-CARRIER-PROTEIN] REDUCTASE [NADH]"/>
    <property type="match status" value="1"/>
</dbReference>
<dbReference type="PANTHER" id="PTHR37480:SF1">
    <property type="entry name" value="ENOYL-[ACYL-CARRIER-PROTEIN] REDUCTASE [NADH]"/>
    <property type="match status" value="1"/>
</dbReference>
<dbReference type="Pfam" id="PF07055">
    <property type="entry name" value="Eno-Rase_FAD_bd"/>
    <property type="match status" value="1"/>
</dbReference>
<dbReference type="Pfam" id="PF12242">
    <property type="entry name" value="Eno-Rase_NADH_b"/>
    <property type="match status" value="1"/>
</dbReference>
<dbReference type="Pfam" id="PF12241">
    <property type="entry name" value="Enoyl_reductase"/>
    <property type="match status" value="1"/>
</dbReference>
<protein>
    <recommendedName>
        <fullName evidence="6 7">Trans-2-enoyl-CoA reductase</fullName>
        <shortName evidence="7">TER1</shortName>
        <ecNumber evidence="4 5">1.3.1.38</ecNumber>
        <ecNumber evidence="4">1.3.1.44</ecNumber>
        <ecNumber evidence="4 5">1.3.1.86</ecNumber>
    </recommendedName>
</protein>
<keyword id="KW-0275">Fatty acid biosynthesis</keyword>
<keyword id="KW-0276">Fatty acid metabolism</keyword>
<keyword id="KW-0444">Lipid biosynthesis</keyword>
<keyword id="KW-0443">Lipid metabolism</keyword>
<keyword id="KW-0496">Mitochondrion</keyword>
<keyword id="KW-0520">NAD</keyword>
<keyword id="KW-0521">NADP</keyword>
<keyword id="KW-0560">Oxidoreductase</keyword>
<keyword id="KW-0809">Transit peptide</keyword>
<sequence length="539" mass="57303">MSCPASPSAAVVSAGALCLCVATVLLATGSNPTALSTASTRSPTSLVRGVDRGLMRPTTAAALTTMREVPQMAEGFSGEATSAWAAAGPQWAAPLVAAASSALALWWWAARRSVRRPLAALAELPTAVTHLAPPMAMFTTTAKVIQPKIRGFICTTTHPIGCEKRVQEEIAYARAHPPTSPGPKRVLVIGCSTGYGLSTRITAAFGYQAATLGVFLAGPPTKGRPAAAGWYNTVAFEKAALEAGLYARSLNGDAFDSTTKARTVEAIKRDLGTVDLVVYSIAAPKRTDPATGVLHKACLKPIGATYTNRTVNTDKAEVTDVSIEPASPEEIADTVKVMGGEDWELWIQALSEAGVLAEGAKTVAYSYIGPEMTWPVYWSGTIGEAKKDVEKAAKRITQQYGCPAYPVVAKALVTQASSAIPVVPLYICLLYRVMKEKGTHEGCIEQMVRLLTTKLYPENGAPIVDEAGRVRVDDWEMAEDVQQAVKDLWSQVSTANLKDISDFAGYQTEFLRLFGFGIDGVDYDQPVDVEADLPSAAQQ</sequence>
<feature type="transit peptide" description="Mitochondrion" evidence="1">
    <location>
        <begin position="1"/>
        <end position="68"/>
    </location>
</feature>
<feature type="chain" id="PRO_0000033619" description="Trans-2-enoyl-CoA reductase">
    <location>
        <begin position="69"/>
        <end position="539"/>
    </location>
</feature>
<feature type="active site" description="Proton donor" evidence="2">
    <location>
        <position position="377"/>
    </location>
</feature>
<feature type="binding site" evidence="2">
    <location>
        <begin position="190"/>
        <end position="195"/>
    </location>
    <ligand>
        <name>NAD(+)</name>
        <dbReference type="ChEBI" id="CHEBI:57540"/>
    </ligand>
</feature>
<feature type="binding site" evidence="2">
    <location>
        <begin position="216"/>
        <end position="217"/>
    </location>
    <ligand>
        <name>NAD(+)</name>
        <dbReference type="ChEBI" id="CHEBI:57540"/>
    </ligand>
</feature>
<feature type="binding site" evidence="2">
    <location>
        <begin position="253"/>
        <end position="254"/>
    </location>
    <ligand>
        <name>NAD(+)</name>
        <dbReference type="ChEBI" id="CHEBI:57540"/>
    </ligand>
</feature>
<feature type="binding site" evidence="2">
    <location>
        <begin position="281"/>
        <end position="282"/>
    </location>
    <ligand>
        <name>NAD(+)</name>
        <dbReference type="ChEBI" id="CHEBI:57540"/>
    </ligand>
</feature>
<feature type="binding site" evidence="2">
    <location>
        <position position="367"/>
    </location>
    <ligand>
        <name>substrate</name>
    </ligand>
</feature>
<feature type="binding site" evidence="2">
    <location>
        <position position="386"/>
    </location>
    <ligand>
        <name>NAD(+)</name>
        <dbReference type="ChEBI" id="CHEBI:57540"/>
    </ligand>
</feature>
<feature type="binding site" evidence="2">
    <location>
        <begin position="412"/>
        <end position="414"/>
    </location>
    <ligand>
        <name>NAD(+)</name>
        <dbReference type="ChEBI" id="CHEBI:57540"/>
    </ligand>
</feature>
<organism>
    <name type="scientific">Euglena gracilis</name>
    <dbReference type="NCBI Taxonomy" id="3039"/>
    <lineage>
        <taxon>Eukaryota</taxon>
        <taxon>Discoba</taxon>
        <taxon>Euglenozoa</taxon>
        <taxon>Euglenida</taxon>
        <taxon>Spirocuta</taxon>
        <taxon>Euglenophyceae</taxon>
        <taxon>Euglenales</taxon>
        <taxon>Euglenaceae</taxon>
        <taxon>Euglena</taxon>
    </lineage>
</organism>
<reference key="1">
    <citation type="journal article" date="2005" name="J. Biol. Chem.">
        <title>Mitochondrial trans-2-enoyl-CoA reductase of wax ester fermentation from Euglena gracilis defines a new family of enzymes involved in lipid synthesis.</title>
        <authorList>
            <person name="Hoffmeister M."/>
            <person name="Piotrowski M."/>
            <person name="Nowitzki U."/>
            <person name="Martin W."/>
        </authorList>
    </citation>
    <scope>NUCLEOTIDE SEQUENCE [MRNA]</scope>
    <scope>FUNCTION</scope>
    <scope>CATALYTIC ACTIVITY</scope>
    <scope>BIOPHYSICOCHEMICAL PROPERTIES</scope>
    <scope>BLOCKAGE OF N-TERMINUS</scope>
    <scope>IDENTIFICATION BY MASS SPECTROMETRY</scope>
    <scope>SUBCELLULAR LOCATION</scope>
    <scope>DEVELOPMENTAL STAGE</scope>
    <scope>SUBUNIT</scope>
    <source>
        <strain>SAG 1224-5/25</strain>
    </source>
</reference>
<reference key="2">
    <citation type="journal article" date="2019" name="PLoS ONE">
        <title>A major isoform of mitochondrial trans-2-enoyl-CoA reductase is dispensable for wax ester production in Euglena gracilis under anaerobic conditions.</title>
        <authorList>
            <person name="Tomiyama T."/>
            <person name="Goto K."/>
            <person name="Tanaka Y."/>
            <person name="Maruta T."/>
            <person name="Ogawa T."/>
            <person name="Sawa Y."/>
            <person name="Ito T."/>
            <person name="Ishikawa T."/>
        </authorList>
    </citation>
    <scope>FUNCTION</scope>
    <scope>CATALYTIC ACTIVITY</scope>
    <scope>SUBCELLULAR LOCATION</scope>
    <scope>DISRUPTION PHENOTYPE</scope>
</reference>
<gene>
    <name type="primary">TER</name>
</gene>
<proteinExistence type="evidence at protein level"/>
<accession>Q5EU90</accession>
<evidence type="ECO:0000250" key="1"/>
<evidence type="ECO:0000250" key="2">
    <source>
        <dbReference type="UniProtKB" id="Q97LU2"/>
    </source>
</evidence>
<evidence type="ECO:0000250" key="3">
    <source>
        <dbReference type="UniProtKB" id="Q9SWQ9"/>
    </source>
</evidence>
<evidence type="ECO:0000269" key="4">
    <source>
    </source>
</evidence>
<evidence type="ECO:0000269" key="5">
    <source>
    </source>
</evidence>
<evidence type="ECO:0000303" key="6">
    <source>
    </source>
</evidence>
<evidence type="ECO:0000303" key="7">
    <source>
    </source>
</evidence>
<evidence type="ECO:0000305" key="8"/>
<evidence type="ECO:0000305" key="9">
    <source>
    </source>
</evidence>
<evidence type="ECO:0000305" key="10">
    <source>
    </source>
</evidence>
<comment type="function">
    <text evidence="4 5">Catalyzes reduction of trans-2-enoyl-CoA to acyl-CoA, an important step in the fatty acid biosynthesis pathway, which is performed in mitochondria under anaerobiosis. Preferably catalyzes the reduction of short chain length substrates such as crotonyl-CoA ((2E)-butenoyl-CoA) and (2E)-hexenoyl-CoA. Can use both NADH and NADPH as electron donor, with 2-3-fold higher specific activities for NADH relative to NADPH. Originally thought to contribute to wax ester production under anaerobic conditions (PubMed:15569691). Later shown to be dispensable for wax ester production under anaerobic conditions, but involved in the greening process (chlorophyll synthesis and/or chloroplast development) (PubMed:30650145).</text>
</comment>
<comment type="catalytic activity">
    <reaction evidence="4">
        <text>a 2,3-saturated acyl-CoA + NAD(+) = a (2E)-enoyl-CoA + NADH + H(+)</text>
        <dbReference type="Rhea" id="RHEA:18177"/>
        <dbReference type="ChEBI" id="CHEBI:15378"/>
        <dbReference type="ChEBI" id="CHEBI:57540"/>
        <dbReference type="ChEBI" id="CHEBI:57945"/>
        <dbReference type="ChEBI" id="CHEBI:58856"/>
        <dbReference type="ChEBI" id="CHEBI:65111"/>
        <dbReference type="EC" id="1.3.1.44"/>
    </reaction>
    <physiologicalReaction direction="right-to-left" evidence="4">
        <dbReference type="Rhea" id="RHEA:18179"/>
    </physiologicalReaction>
</comment>
<comment type="catalytic activity">
    <reaction evidence="4">
        <text>butanoyl-CoA + NAD(+) = (2E)-butenoyl-CoA + NADH + H(+)</text>
        <dbReference type="Rhea" id="RHEA:52572"/>
        <dbReference type="ChEBI" id="CHEBI:15378"/>
        <dbReference type="ChEBI" id="CHEBI:57332"/>
        <dbReference type="ChEBI" id="CHEBI:57371"/>
        <dbReference type="ChEBI" id="CHEBI:57540"/>
        <dbReference type="ChEBI" id="CHEBI:57945"/>
    </reaction>
    <physiologicalReaction direction="right-to-left" evidence="4">
        <dbReference type="Rhea" id="RHEA:52574"/>
    </physiologicalReaction>
</comment>
<comment type="catalytic activity">
    <reaction evidence="4">
        <text>hexanoyl-CoA + NAD(+) = (2E)-hexenoyl-CoA + NADH + H(+)</text>
        <dbReference type="Rhea" id="RHEA:52576"/>
        <dbReference type="ChEBI" id="CHEBI:15378"/>
        <dbReference type="ChEBI" id="CHEBI:57540"/>
        <dbReference type="ChEBI" id="CHEBI:57945"/>
        <dbReference type="ChEBI" id="CHEBI:62077"/>
        <dbReference type="ChEBI" id="CHEBI:62620"/>
    </reaction>
    <physiologicalReaction direction="right-to-left" evidence="4">
        <dbReference type="Rhea" id="RHEA:52578"/>
    </physiologicalReaction>
</comment>
<comment type="catalytic activity">
    <reaction evidence="4 5">
        <text>a (2E)-enoyl-CoA + NADPH + H(+) = a 2,3-saturated acyl-CoA + NADP(+)</text>
        <dbReference type="Rhea" id="RHEA:33763"/>
        <dbReference type="ChEBI" id="CHEBI:15378"/>
        <dbReference type="ChEBI" id="CHEBI:57783"/>
        <dbReference type="ChEBI" id="CHEBI:58349"/>
        <dbReference type="ChEBI" id="CHEBI:58856"/>
        <dbReference type="ChEBI" id="CHEBI:65111"/>
        <dbReference type="EC" id="1.3.1.38"/>
    </reaction>
    <physiologicalReaction direction="left-to-right" evidence="4 5">
        <dbReference type="Rhea" id="RHEA:33764"/>
    </physiologicalReaction>
</comment>
<comment type="catalytic activity">
    <reaction evidence="4 5">
        <text>butanoyl-CoA + NADP(+) = (2E)-butenoyl-CoA + NADPH + H(+)</text>
        <dbReference type="Rhea" id="RHEA:27906"/>
        <dbReference type="ChEBI" id="CHEBI:15378"/>
        <dbReference type="ChEBI" id="CHEBI:57332"/>
        <dbReference type="ChEBI" id="CHEBI:57371"/>
        <dbReference type="ChEBI" id="CHEBI:57783"/>
        <dbReference type="ChEBI" id="CHEBI:58349"/>
        <dbReference type="EC" id="1.3.1.86"/>
    </reaction>
    <physiologicalReaction direction="right-to-left" evidence="4 5">
        <dbReference type="Rhea" id="RHEA:27908"/>
    </physiologicalReaction>
</comment>
<comment type="catalytic activity">
    <reaction evidence="4">
        <text>(2E)-hexenoyl-CoA + NADPH + H(+) = hexanoyl-CoA + NADP(+)</text>
        <dbReference type="Rhea" id="RHEA:44956"/>
        <dbReference type="ChEBI" id="CHEBI:15378"/>
        <dbReference type="ChEBI" id="CHEBI:57783"/>
        <dbReference type="ChEBI" id="CHEBI:58349"/>
        <dbReference type="ChEBI" id="CHEBI:62077"/>
        <dbReference type="ChEBI" id="CHEBI:62620"/>
    </reaction>
    <physiologicalReaction direction="left-to-right" evidence="4">
        <dbReference type="Rhea" id="RHEA:44957"/>
    </physiologicalReaction>
</comment>
<comment type="biophysicochemical properties">
    <kinetics>
        <KM evidence="4">68 uM for (2E)-butenoyl-CoA (crotonyl-CoA) (in the presence of NADH)</KM>
        <KM evidence="4">91 uM for trans-2-hexenoyl-CoA (in the presence of NADH)</KM>
        <KM evidence="4">109 uM for NADH (in the presence of (2E)-butenoyl-CoA (crotonyl-CoA))</KM>
        <KM evidence="4">119 uM for NADPH (in the presence of (2E)-butenoyl-CoA (crotonyl-CoA))</KM>
    </kinetics>
</comment>
<comment type="pathway">
    <text evidence="9 10">Lipid metabolism; fatty acid metabolism.</text>
</comment>
<comment type="subunit">
    <text evidence="4">Monomer.</text>
</comment>
<comment type="subcellular location">
    <subcellularLocation>
        <location evidence="4 5">Mitochondrion</location>
    </subcellularLocation>
</comment>
<comment type="developmental stage">
    <text evidence="4">Expressed under aerobic and anaerobic conditions.</text>
</comment>
<comment type="PTM">
    <text evidence="4">The N-terminus is blocked.</text>
</comment>
<comment type="disruption phenotype">
    <text evidence="5">Severe bleaching phenotype concomitant with negligible levels of chlorophylls and glycolipids. The levels of alanine, glycine, tryptophan, and arginine, as well as those for glycerophospholipids were highly impacted in the mutant under anaerobic conditions.</text>
</comment>
<comment type="miscellaneous">
    <text evidence="3">Euglena gracilis exhibits the metabolic behavior of a plant in the light and of an animal in the dark.</text>
</comment>
<comment type="similarity">
    <text evidence="8">Belongs to the TER reductase family.</text>
</comment>
<name>TER_EUGGR</name>